<organism>
    <name type="scientific">Escherichia coli O157:H7</name>
    <dbReference type="NCBI Taxonomy" id="83334"/>
    <lineage>
        <taxon>Bacteria</taxon>
        <taxon>Pseudomonadati</taxon>
        <taxon>Pseudomonadota</taxon>
        <taxon>Gammaproteobacteria</taxon>
        <taxon>Enterobacterales</taxon>
        <taxon>Enterobacteriaceae</taxon>
        <taxon>Escherichia</taxon>
    </lineage>
</organism>
<comment type="function">
    <text evidence="2">Protein and nucleotide deglycase that catalyzes the deglycation of the Maillard adducts formed between amino groups of proteins or nucleotides and reactive carbonyl groups of glyoxals. Thus, functions as a protein deglycase that repairs methylglyoxal- and glyoxal-glycated proteins, and releases repaired proteins and lactate or glycolate, respectively. Deglycates cysteine, arginine and lysine residues in proteins, and thus reactivates these proteins by reversing glycation by glyoxals. Acts on early glycation intermediates (hemithioacetals and aminocarbinols), preventing the formation of Schiff bases and advanced glycation endproducts (AGE). Also functions as a nucleotide deglycase able to repair glycated guanine in the free nucleotide pool (GTP, GDP, GMP, dGTP) and in DNA and RNA. Is thus involved in a major nucleotide repair system named guanine glycation repair (GG repair), dedicated to reversing methylglyoxal and glyoxal damage via nucleotide sanitization and direct nucleic acid repair. Plays an important role in protecting cells from carbonyl stress.</text>
</comment>
<comment type="catalytic activity">
    <reaction evidence="2">
        <text>N(omega)-(1-hydroxy-2-oxopropyl)-L-arginyl-[protein] + H2O = lactate + L-arginyl-[protein] + H(+)</text>
        <dbReference type="Rhea" id="RHEA:49548"/>
        <dbReference type="Rhea" id="RHEA-COMP:10532"/>
        <dbReference type="Rhea" id="RHEA-COMP:12428"/>
        <dbReference type="ChEBI" id="CHEBI:15377"/>
        <dbReference type="ChEBI" id="CHEBI:15378"/>
        <dbReference type="ChEBI" id="CHEBI:24996"/>
        <dbReference type="ChEBI" id="CHEBI:29965"/>
        <dbReference type="ChEBI" id="CHEBI:131708"/>
        <dbReference type="EC" id="3.5.1.124"/>
    </reaction>
</comment>
<comment type="catalytic activity">
    <reaction evidence="2">
        <text>N(6)-(1-hydroxy-2-oxopropyl)-L-lysyl-[protein] + H2O = lactate + L-lysyl-[protein] + H(+)</text>
        <dbReference type="Rhea" id="RHEA:49552"/>
        <dbReference type="Rhea" id="RHEA-COMP:9752"/>
        <dbReference type="Rhea" id="RHEA-COMP:12429"/>
        <dbReference type="ChEBI" id="CHEBI:15377"/>
        <dbReference type="ChEBI" id="CHEBI:15378"/>
        <dbReference type="ChEBI" id="CHEBI:24996"/>
        <dbReference type="ChEBI" id="CHEBI:29969"/>
        <dbReference type="ChEBI" id="CHEBI:131709"/>
        <dbReference type="EC" id="3.5.1.124"/>
    </reaction>
</comment>
<comment type="catalytic activity">
    <reaction evidence="2">
        <text>S-(1-hydroxy-2-oxopropyl)-L-cysteinyl-[protein] + H2O = lactate + L-cysteinyl-[protein] + H(+)</text>
        <dbReference type="Rhea" id="RHEA:49556"/>
        <dbReference type="Rhea" id="RHEA-COMP:10131"/>
        <dbReference type="Rhea" id="RHEA-COMP:12430"/>
        <dbReference type="ChEBI" id="CHEBI:15377"/>
        <dbReference type="ChEBI" id="CHEBI:15378"/>
        <dbReference type="ChEBI" id="CHEBI:24996"/>
        <dbReference type="ChEBI" id="CHEBI:29950"/>
        <dbReference type="ChEBI" id="CHEBI:131710"/>
        <dbReference type="EC" id="3.5.1.124"/>
    </reaction>
</comment>
<comment type="catalytic activity">
    <reaction evidence="2">
        <text>N(omega)-(1-hydroxy-2-oxoethyl)-L-arginyl-[protein] + H2O = L-arginyl-[protein] + glycolate + H(+)</text>
        <dbReference type="Rhea" id="RHEA:57188"/>
        <dbReference type="Rhea" id="RHEA-COMP:10532"/>
        <dbReference type="Rhea" id="RHEA-COMP:14844"/>
        <dbReference type="ChEBI" id="CHEBI:15377"/>
        <dbReference type="ChEBI" id="CHEBI:15378"/>
        <dbReference type="ChEBI" id="CHEBI:29805"/>
        <dbReference type="ChEBI" id="CHEBI:29965"/>
        <dbReference type="ChEBI" id="CHEBI:141553"/>
        <dbReference type="EC" id="3.5.1.124"/>
    </reaction>
</comment>
<comment type="catalytic activity">
    <reaction evidence="2">
        <text>N(6)-(1-hydroxy-2-oxoethyl)-L-lysyl-[protein] + H2O = glycolate + L-lysyl-[protein] + H(+)</text>
        <dbReference type="Rhea" id="RHEA:57192"/>
        <dbReference type="Rhea" id="RHEA-COMP:9752"/>
        <dbReference type="Rhea" id="RHEA-COMP:14845"/>
        <dbReference type="ChEBI" id="CHEBI:15377"/>
        <dbReference type="ChEBI" id="CHEBI:15378"/>
        <dbReference type="ChEBI" id="CHEBI:29805"/>
        <dbReference type="ChEBI" id="CHEBI:29969"/>
        <dbReference type="ChEBI" id="CHEBI:141554"/>
        <dbReference type="EC" id="3.5.1.124"/>
    </reaction>
</comment>
<comment type="catalytic activity">
    <reaction evidence="2">
        <text>S-(1-hydroxy-2-oxoethyl)-L-cysteinyl-[protein] + H2O = glycolate + L-cysteinyl-[protein] + H(+)</text>
        <dbReference type="Rhea" id="RHEA:57196"/>
        <dbReference type="Rhea" id="RHEA-COMP:10131"/>
        <dbReference type="Rhea" id="RHEA-COMP:14846"/>
        <dbReference type="ChEBI" id="CHEBI:15377"/>
        <dbReference type="ChEBI" id="CHEBI:15378"/>
        <dbReference type="ChEBI" id="CHEBI:29805"/>
        <dbReference type="ChEBI" id="CHEBI:29950"/>
        <dbReference type="ChEBI" id="CHEBI:141555"/>
        <dbReference type="EC" id="3.5.1.124"/>
    </reaction>
</comment>
<comment type="catalytic activity">
    <reaction evidence="2">
        <text>N(2)-(1-hydroxy-2-oxopropyl)-dGTP + H2O = lactate + dGTP + H(+)</text>
        <dbReference type="Rhea" id="RHEA:57244"/>
        <dbReference type="ChEBI" id="CHEBI:15377"/>
        <dbReference type="ChEBI" id="CHEBI:15378"/>
        <dbReference type="ChEBI" id="CHEBI:24996"/>
        <dbReference type="ChEBI" id="CHEBI:61429"/>
        <dbReference type="ChEBI" id="CHEBI:141569"/>
    </reaction>
</comment>
<comment type="catalytic activity">
    <reaction evidence="2">
        <text>N(2)-(1-hydroxy-2-oxopropyl)-GTP + H2O = lactate + GTP + H(+)</text>
        <dbReference type="Rhea" id="RHEA:57256"/>
        <dbReference type="ChEBI" id="CHEBI:15377"/>
        <dbReference type="ChEBI" id="CHEBI:15378"/>
        <dbReference type="ChEBI" id="CHEBI:24996"/>
        <dbReference type="ChEBI" id="CHEBI:37565"/>
        <dbReference type="ChEBI" id="CHEBI:141570"/>
    </reaction>
</comment>
<comment type="catalytic activity">
    <reaction evidence="2">
        <text>N(2)-(1-hydroxy-2-oxopropyl)-GDP + H2O = lactate + GDP + H(+)</text>
        <dbReference type="Rhea" id="RHEA:57260"/>
        <dbReference type="ChEBI" id="CHEBI:15377"/>
        <dbReference type="ChEBI" id="CHEBI:15378"/>
        <dbReference type="ChEBI" id="CHEBI:24996"/>
        <dbReference type="ChEBI" id="CHEBI:58189"/>
        <dbReference type="ChEBI" id="CHEBI:141573"/>
    </reaction>
</comment>
<comment type="catalytic activity">
    <reaction evidence="2">
        <text>N(2)-(1-hydroxy-2-oxopropyl)-GMP + H2O = lactate + GMP + H(+)</text>
        <dbReference type="Rhea" id="RHEA:57268"/>
        <dbReference type="ChEBI" id="CHEBI:15377"/>
        <dbReference type="ChEBI" id="CHEBI:15378"/>
        <dbReference type="ChEBI" id="CHEBI:24996"/>
        <dbReference type="ChEBI" id="CHEBI:58115"/>
        <dbReference type="ChEBI" id="CHEBI:141575"/>
    </reaction>
</comment>
<comment type="catalytic activity">
    <reaction evidence="2">
        <text>N(2)-(1-hydroxy-2-oxoethyl)-dGTP + H2O = dGTP + glycolate + H(+)</text>
        <dbReference type="Rhea" id="RHEA:57248"/>
        <dbReference type="ChEBI" id="CHEBI:15377"/>
        <dbReference type="ChEBI" id="CHEBI:15378"/>
        <dbReference type="ChEBI" id="CHEBI:29805"/>
        <dbReference type="ChEBI" id="CHEBI:61429"/>
        <dbReference type="ChEBI" id="CHEBI:141572"/>
    </reaction>
</comment>
<comment type="catalytic activity">
    <reaction evidence="2">
        <text>N(2)-(1-hydroxy-2-oxoethyl)-GTP + H2O = glycolate + GTP + H(+)</text>
        <dbReference type="Rhea" id="RHEA:57252"/>
        <dbReference type="ChEBI" id="CHEBI:15377"/>
        <dbReference type="ChEBI" id="CHEBI:15378"/>
        <dbReference type="ChEBI" id="CHEBI:29805"/>
        <dbReference type="ChEBI" id="CHEBI:37565"/>
        <dbReference type="ChEBI" id="CHEBI:141571"/>
    </reaction>
</comment>
<comment type="catalytic activity">
    <reaction evidence="2">
        <text>N(2)-(1-hydroxy-2-oxoethyl)-GDP + H2O = glycolate + GDP + H(+)</text>
        <dbReference type="Rhea" id="RHEA:57264"/>
        <dbReference type="ChEBI" id="CHEBI:15377"/>
        <dbReference type="ChEBI" id="CHEBI:15378"/>
        <dbReference type="ChEBI" id="CHEBI:29805"/>
        <dbReference type="ChEBI" id="CHEBI:58189"/>
        <dbReference type="ChEBI" id="CHEBI:141574"/>
    </reaction>
</comment>
<comment type="catalytic activity">
    <reaction evidence="2">
        <text>N(2)-(1-hydroxy-2-oxoethyl)-GMP + H2O = glycolate + GMP + H(+)</text>
        <dbReference type="Rhea" id="RHEA:57304"/>
        <dbReference type="ChEBI" id="CHEBI:15377"/>
        <dbReference type="ChEBI" id="CHEBI:15378"/>
        <dbReference type="ChEBI" id="CHEBI:29805"/>
        <dbReference type="ChEBI" id="CHEBI:58115"/>
        <dbReference type="ChEBI" id="CHEBI:141576"/>
    </reaction>
</comment>
<comment type="catalytic activity">
    <reaction evidence="2">
        <text>an N(2)-(1-hydroxy-2-oxopropyl)-guanosine in RNA + H2O = a guanosine in RNA + lactate + H(+)</text>
        <dbReference type="Rhea" id="RHEA:57288"/>
        <dbReference type="Rhea" id="RHEA-COMP:14855"/>
        <dbReference type="Rhea" id="RHEA-COMP:14858"/>
        <dbReference type="ChEBI" id="CHEBI:15377"/>
        <dbReference type="ChEBI" id="CHEBI:15378"/>
        <dbReference type="ChEBI" id="CHEBI:24996"/>
        <dbReference type="ChEBI" id="CHEBI:74269"/>
        <dbReference type="ChEBI" id="CHEBI:141580"/>
    </reaction>
</comment>
<comment type="catalytic activity">
    <reaction evidence="2">
        <text>an N(2)-(1-hydroxy-2-oxopropyl)-2'-deoxyguanosine in DNA + H2O = a 2'-deoxyguanosine in DNA + lactate + H(+)</text>
        <dbReference type="Rhea" id="RHEA:57300"/>
        <dbReference type="Rhea" id="RHEA-COMP:11367"/>
        <dbReference type="Rhea" id="RHEA-COMP:14856"/>
        <dbReference type="ChEBI" id="CHEBI:15377"/>
        <dbReference type="ChEBI" id="CHEBI:15378"/>
        <dbReference type="ChEBI" id="CHEBI:24996"/>
        <dbReference type="ChEBI" id="CHEBI:85445"/>
        <dbReference type="ChEBI" id="CHEBI:141578"/>
    </reaction>
</comment>
<comment type="catalytic activity">
    <reaction evidence="2">
        <text>an N(2)-(1-hydroxy-2-oxoethyl)-guanosine in RNA + H2O = a guanosine in RNA + glycolate + H(+)</text>
        <dbReference type="Rhea" id="RHEA:57292"/>
        <dbReference type="Rhea" id="RHEA-COMP:14855"/>
        <dbReference type="Rhea" id="RHEA-COMP:14859"/>
        <dbReference type="ChEBI" id="CHEBI:15377"/>
        <dbReference type="ChEBI" id="CHEBI:15378"/>
        <dbReference type="ChEBI" id="CHEBI:29805"/>
        <dbReference type="ChEBI" id="CHEBI:74269"/>
        <dbReference type="ChEBI" id="CHEBI:141581"/>
    </reaction>
</comment>
<comment type="catalytic activity">
    <reaction evidence="2">
        <text>an N(2)-(1-hydroxy-2-oxoethyl)-2'-deoxyguanosine in DNA + H2O = a 2'-deoxyguanosine in DNA + glycolate + H(+)</text>
        <dbReference type="Rhea" id="RHEA:57296"/>
        <dbReference type="Rhea" id="RHEA-COMP:11367"/>
        <dbReference type="Rhea" id="RHEA-COMP:14857"/>
        <dbReference type="ChEBI" id="CHEBI:15377"/>
        <dbReference type="ChEBI" id="CHEBI:15378"/>
        <dbReference type="ChEBI" id="CHEBI:29805"/>
        <dbReference type="ChEBI" id="CHEBI:85445"/>
        <dbReference type="ChEBI" id="CHEBI:141579"/>
    </reaction>
</comment>
<comment type="subunit">
    <text evidence="2">Homodimer.</text>
</comment>
<comment type="subcellular location">
    <subcellularLocation>
        <location evidence="2">Cytoplasm</location>
    </subcellularLocation>
</comment>
<comment type="induction">
    <text evidence="2">By heat shock.</text>
</comment>
<comment type="similarity">
    <text evidence="2">Belongs to the peptidase C56 family. HchA subfamily.</text>
</comment>
<dbReference type="EC" id="3.1.2.-" evidence="2"/>
<dbReference type="EC" id="3.5.1.-" evidence="2"/>
<dbReference type="EC" id="3.5.1.124" evidence="2"/>
<dbReference type="EMBL" id="AE005174">
    <property type="protein sequence ID" value="AAG56980.1"/>
    <property type="molecule type" value="Genomic_DNA"/>
</dbReference>
<dbReference type="EMBL" id="BA000007">
    <property type="protein sequence ID" value="BAB36128.1"/>
    <property type="molecule type" value="Genomic_DNA"/>
</dbReference>
<dbReference type="PIR" id="A99967">
    <property type="entry name" value="A99967"/>
</dbReference>
<dbReference type="PIR" id="H85814">
    <property type="entry name" value="H85814"/>
</dbReference>
<dbReference type="RefSeq" id="NP_310732.1">
    <property type="nucleotide sequence ID" value="NC_002695.1"/>
</dbReference>
<dbReference type="RefSeq" id="WP_000218228.1">
    <property type="nucleotide sequence ID" value="NZ_VOAI01000028.1"/>
</dbReference>
<dbReference type="SMR" id="Q8XB78"/>
<dbReference type="STRING" id="155864.Z3059"/>
<dbReference type="MEROPS" id="C56.006"/>
<dbReference type="GeneID" id="912670"/>
<dbReference type="KEGG" id="ece:Z3059"/>
<dbReference type="KEGG" id="ecs:ECs_2705"/>
<dbReference type="PATRIC" id="fig|386585.9.peg.2833"/>
<dbReference type="eggNOG" id="COG0693">
    <property type="taxonomic scope" value="Bacteria"/>
</dbReference>
<dbReference type="HOGENOM" id="CLU_066933_0_0_6"/>
<dbReference type="OMA" id="IPGKMEW"/>
<dbReference type="Proteomes" id="UP000000558">
    <property type="component" value="Chromosome"/>
</dbReference>
<dbReference type="Proteomes" id="UP000002519">
    <property type="component" value="Chromosome"/>
</dbReference>
<dbReference type="GO" id="GO:0005737">
    <property type="term" value="C:cytoplasm"/>
    <property type="evidence" value="ECO:0007669"/>
    <property type="project" value="UniProtKB-SubCell"/>
</dbReference>
<dbReference type="GO" id="GO:0019172">
    <property type="term" value="F:glyoxalase III activity"/>
    <property type="evidence" value="ECO:0007669"/>
    <property type="project" value="TreeGrafter"/>
</dbReference>
<dbReference type="GO" id="GO:0036524">
    <property type="term" value="F:protein deglycase activity"/>
    <property type="evidence" value="ECO:0007669"/>
    <property type="project" value="UniProtKB-UniRule"/>
</dbReference>
<dbReference type="GO" id="GO:0016790">
    <property type="term" value="F:thiolester hydrolase activity"/>
    <property type="evidence" value="ECO:0007669"/>
    <property type="project" value="UniProtKB-UniRule"/>
</dbReference>
<dbReference type="GO" id="GO:0008270">
    <property type="term" value="F:zinc ion binding"/>
    <property type="evidence" value="ECO:0007669"/>
    <property type="project" value="UniProtKB-UniRule"/>
</dbReference>
<dbReference type="GO" id="GO:0006281">
    <property type="term" value="P:DNA repair"/>
    <property type="evidence" value="ECO:0007669"/>
    <property type="project" value="UniProtKB-UniRule"/>
</dbReference>
<dbReference type="GO" id="GO:0019243">
    <property type="term" value="P:methylglyoxal catabolic process to D-lactate via S-lactoyl-glutathione"/>
    <property type="evidence" value="ECO:0007669"/>
    <property type="project" value="TreeGrafter"/>
</dbReference>
<dbReference type="GO" id="GO:0030091">
    <property type="term" value="P:protein repair"/>
    <property type="evidence" value="ECO:0007669"/>
    <property type="project" value="UniProtKB-UniRule"/>
</dbReference>
<dbReference type="FunFam" id="3.40.50.880:FF:000026">
    <property type="entry name" value="Protein/nucleic acid deglycase HchA"/>
    <property type="match status" value="1"/>
</dbReference>
<dbReference type="Gene3D" id="3.40.50.880">
    <property type="match status" value="1"/>
</dbReference>
<dbReference type="HAMAP" id="MF_01046">
    <property type="entry name" value="Deglycase_HchA"/>
    <property type="match status" value="1"/>
</dbReference>
<dbReference type="InterPro" id="IPR029062">
    <property type="entry name" value="Class_I_gatase-like"/>
</dbReference>
<dbReference type="InterPro" id="IPR017283">
    <property type="entry name" value="HchA"/>
</dbReference>
<dbReference type="InterPro" id="IPR050325">
    <property type="entry name" value="Prot/Nucl_acid_deglycase"/>
</dbReference>
<dbReference type="NCBIfam" id="NF003168">
    <property type="entry name" value="PRK04155.1"/>
    <property type="match status" value="1"/>
</dbReference>
<dbReference type="PANTHER" id="PTHR48094">
    <property type="entry name" value="PROTEIN/NUCLEIC ACID DEGLYCASE DJ-1-RELATED"/>
    <property type="match status" value="1"/>
</dbReference>
<dbReference type="PANTHER" id="PTHR48094:SF20">
    <property type="entry name" value="PROTEIN_NUCLEIC ACID DEGLYCASE 1"/>
    <property type="match status" value="1"/>
</dbReference>
<dbReference type="PIRSF" id="PIRSF037798">
    <property type="entry name" value="Chaperone_HchA"/>
    <property type="match status" value="1"/>
</dbReference>
<dbReference type="SUPFAM" id="SSF52317">
    <property type="entry name" value="Class I glutamine amidotransferase-like"/>
    <property type="match status" value="1"/>
</dbReference>
<protein>
    <recommendedName>
        <fullName evidence="2">Protein/nucleic acid deglycase HchA</fullName>
        <ecNumber evidence="2">3.1.2.-</ecNumber>
        <ecNumber evidence="2">3.5.1.-</ecNumber>
        <ecNumber evidence="2">3.5.1.124</ecNumber>
    </recommendedName>
    <alternativeName>
        <fullName evidence="2">Maillard deglycase</fullName>
    </alternativeName>
</protein>
<feature type="initiator methionine" description="Removed" evidence="1">
    <location>
        <position position="1"/>
    </location>
</feature>
<feature type="chain" id="PRO_0000209413" description="Protein/nucleic acid deglycase HchA">
    <location>
        <begin position="2"/>
        <end position="283"/>
    </location>
</feature>
<feature type="active site" description="Nucleophile" evidence="2">
    <location>
        <position position="185"/>
    </location>
</feature>
<feature type="binding site" evidence="2">
    <location>
        <position position="86"/>
    </location>
    <ligand>
        <name>Zn(2+)</name>
        <dbReference type="ChEBI" id="CHEBI:29105"/>
    </ligand>
</feature>
<feature type="binding site" evidence="2">
    <location>
        <position position="91"/>
    </location>
    <ligand>
        <name>Zn(2+)</name>
        <dbReference type="ChEBI" id="CHEBI:29105"/>
    </ligand>
</feature>
<feature type="binding site" evidence="2">
    <location>
        <position position="123"/>
    </location>
    <ligand>
        <name>Zn(2+)</name>
        <dbReference type="ChEBI" id="CHEBI:29105"/>
    </ligand>
</feature>
<accession>Q8XB78</accession>
<evidence type="ECO:0000250" key="1"/>
<evidence type="ECO:0000255" key="2">
    <source>
        <dbReference type="HAMAP-Rule" id="MF_01046"/>
    </source>
</evidence>
<gene>
    <name evidence="2" type="primary">hchA</name>
    <name type="ordered locus">Z3059</name>
    <name type="ordered locus">ECs2705</name>
</gene>
<proteinExistence type="inferred from homology"/>
<keyword id="KW-0963">Cytoplasm</keyword>
<keyword id="KW-0227">DNA damage</keyword>
<keyword id="KW-0234">DNA repair</keyword>
<keyword id="KW-0378">Hydrolase</keyword>
<keyword id="KW-0479">Metal-binding</keyword>
<keyword id="KW-1185">Reference proteome</keyword>
<keyword id="KW-0346">Stress response</keyword>
<keyword id="KW-0862">Zinc</keyword>
<reference key="1">
    <citation type="journal article" date="2001" name="Nature">
        <title>Genome sequence of enterohaemorrhagic Escherichia coli O157:H7.</title>
        <authorList>
            <person name="Perna N.T."/>
            <person name="Plunkett G. III"/>
            <person name="Burland V."/>
            <person name="Mau B."/>
            <person name="Glasner J.D."/>
            <person name="Rose D.J."/>
            <person name="Mayhew G.F."/>
            <person name="Evans P.S."/>
            <person name="Gregor J."/>
            <person name="Kirkpatrick H.A."/>
            <person name="Posfai G."/>
            <person name="Hackett J."/>
            <person name="Klink S."/>
            <person name="Boutin A."/>
            <person name="Shao Y."/>
            <person name="Miller L."/>
            <person name="Grotbeck E.J."/>
            <person name="Davis N.W."/>
            <person name="Lim A."/>
            <person name="Dimalanta E.T."/>
            <person name="Potamousis K."/>
            <person name="Apodaca J."/>
            <person name="Anantharaman T.S."/>
            <person name="Lin J."/>
            <person name="Yen G."/>
            <person name="Schwartz D.C."/>
            <person name="Welch R.A."/>
            <person name="Blattner F.R."/>
        </authorList>
    </citation>
    <scope>NUCLEOTIDE SEQUENCE [LARGE SCALE GENOMIC DNA]</scope>
    <source>
        <strain>O157:H7 / EDL933 / ATCC 700927 / EHEC</strain>
    </source>
</reference>
<reference key="2">
    <citation type="journal article" date="2001" name="DNA Res.">
        <title>Complete genome sequence of enterohemorrhagic Escherichia coli O157:H7 and genomic comparison with a laboratory strain K-12.</title>
        <authorList>
            <person name="Hayashi T."/>
            <person name="Makino K."/>
            <person name="Ohnishi M."/>
            <person name="Kurokawa K."/>
            <person name="Ishii K."/>
            <person name="Yokoyama K."/>
            <person name="Han C.-G."/>
            <person name="Ohtsubo E."/>
            <person name="Nakayama K."/>
            <person name="Murata T."/>
            <person name="Tanaka M."/>
            <person name="Tobe T."/>
            <person name="Iida T."/>
            <person name="Takami H."/>
            <person name="Honda T."/>
            <person name="Sasakawa C."/>
            <person name="Ogasawara N."/>
            <person name="Yasunaga T."/>
            <person name="Kuhara S."/>
            <person name="Shiba T."/>
            <person name="Hattori M."/>
            <person name="Shinagawa H."/>
        </authorList>
    </citation>
    <scope>NUCLEOTIDE SEQUENCE [LARGE SCALE GENOMIC DNA]</scope>
    <source>
        <strain>O157:H7 / Sakai / RIMD 0509952 / EHEC</strain>
    </source>
</reference>
<sequence>MTVQTSKNPQVDIAEDNAFFPSEYSLSQYTSPVSDLDGVDYPKPYRGKHKILVIAADERYLPTDNGKLFSTGNHPIETLLPLYHLHAAGFEFEVATISGLMTKFEYWAMPQKDEKVMPFFEQHKSLFRNPKKLADVVASLNADSEYAAIFVPGGHGALIGLPESQDVAAALQWAIKNDRFVISLCHGPAAFLALRHGDNPLNGYSICAFPDAADKQTPEIGYMPGHLTWYFGEELKKMGMNIINDDITGRVHKDRKLLTGDSPFAANALGKLAAQEMLAAYAG</sequence>
<name>HCHA_ECO57</name>